<feature type="chain" id="PRO_0000023049" description="Aspartate 1-decarboxylase beta chain" evidence="1">
    <location>
        <begin position="1"/>
        <end position="24"/>
    </location>
</feature>
<feature type="chain" id="PRO_0000023050" description="Aspartate 1-decarboxylase alpha chain" evidence="1">
    <location>
        <begin position="25"/>
        <end position="128"/>
    </location>
</feature>
<feature type="active site" description="Schiff-base intermediate with substrate; via pyruvic acid" evidence="1">
    <location>
        <position position="25"/>
    </location>
</feature>
<feature type="active site" description="Proton donor" evidence="1">
    <location>
        <position position="58"/>
    </location>
</feature>
<feature type="binding site" evidence="1">
    <location>
        <position position="57"/>
    </location>
    <ligand>
        <name>substrate</name>
    </ligand>
</feature>
<feature type="binding site" evidence="1">
    <location>
        <begin position="73"/>
        <end position="75"/>
    </location>
    <ligand>
        <name>substrate</name>
    </ligand>
</feature>
<feature type="modified residue" description="Pyruvic acid (Ser)" evidence="1">
    <location>
        <position position="25"/>
    </location>
</feature>
<gene>
    <name evidence="1" type="primary">panD</name>
    <name type="ordered locus">BMA0700</name>
</gene>
<organism>
    <name type="scientific">Burkholderia mallei (strain ATCC 23344)</name>
    <dbReference type="NCBI Taxonomy" id="243160"/>
    <lineage>
        <taxon>Bacteria</taxon>
        <taxon>Pseudomonadati</taxon>
        <taxon>Pseudomonadota</taxon>
        <taxon>Betaproteobacteria</taxon>
        <taxon>Burkholderiales</taxon>
        <taxon>Burkholderiaceae</taxon>
        <taxon>Burkholderia</taxon>
        <taxon>pseudomallei group</taxon>
    </lineage>
</organism>
<keyword id="KW-0068">Autocatalytic cleavage</keyword>
<keyword id="KW-0963">Cytoplasm</keyword>
<keyword id="KW-0210">Decarboxylase</keyword>
<keyword id="KW-0456">Lyase</keyword>
<keyword id="KW-0566">Pantothenate biosynthesis</keyword>
<keyword id="KW-0670">Pyruvate</keyword>
<keyword id="KW-1185">Reference proteome</keyword>
<keyword id="KW-0704">Schiff base</keyword>
<keyword id="KW-0865">Zymogen</keyword>
<evidence type="ECO:0000255" key="1">
    <source>
        <dbReference type="HAMAP-Rule" id="MF_00446"/>
    </source>
</evidence>
<name>PAND_BURMA</name>
<accession>Q62LE8</accession>
<sequence length="128" mass="14392">MQRHMLKSKIHRAAVTHCELHYEGSCAIDEDLLEAANIVENERIDIWNVNNGERFSTYAIKGERGSGMISLNGSAARRAQLGDLVIIAAFAMIDEQELKAGWKPDLVFVDEDNKIKGSRDHVPTQNWT</sequence>
<proteinExistence type="inferred from homology"/>
<comment type="function">
    <text evidence="1">Catalyzes the pyruvoyl-dependent decarboxylation of aspartate to produce beta-alanine.</text>
</comment>
<comment type="catalytic activity">
    <reaction evidence="1">
        <text>L-aspartate + H(+) = beta-alanine + CO2</text>
        <dbReference type="Rhea" id="RHEA:19497"/>
        <dbReference type="ChEBI" id="CHEBI:15378"/>
        <dbReference type="ChEBI" id="CHEBI:16526"/>
        <dbReference type="ChEBI" id="CHEBI:29991"/>
        <dbReference type="ChEBI" id="CHEBI:57966"/>
        <dbReference type="EC" id="4.1.1.11"/>
    </reaction>
</comment>
<comment type="cofactor">
    <cofactor evidence="1">
        <name>pyruvate</name>
        <dbReference type="ChEBI" id="CHEBI:15361"/>
    </cofactor>
    <text evidence="1">Binds 1 pyruvoyl group covalently per subunit.</text>
</comment>
<comment type="pathway">
    <text evidence="1">Cofactor biosynthesis; (R)-pantothenate biosynthesis; beta-alanine from L-aspartate: step 1/1.</text>
</comment>
<comment type="subunit">
    <text evidence="1">Heterooctamer of four alpha and four beta subunits.</text>
</comment>
<comment type="subcellular location">
    <subcellularLocation>
        <location evidence="1">Cytoplasm</location>
    </subcellularLocation>
</comment>
<comment type="PTM">
    <text evidence="1">Is synthesized initially as an inactive proenzyme, which is activated by self-cleavage at a specific serine bond to produce a beta-subunit with a hydroxyl group at its C-terminus and an alpha-subunit with a pyruvoyl group at its N-terminus.</text>
</comment>
<comment type="similarity">
    <text evidence="1">Belongs to the PanD family.</text>
</comment>
<dbReference type="EC" id="4.1.1.11" evidence="1"/>
<dbReference type="EMBL" id="CP000010">
    <property type="protein sequence ID" value="AAU49243.1"/>
    <property type="molecule type" value="Genomic_DNA"/>
</dbReference>
<dbReference type="RefSeq" id="WP_004191357.1">
    <property type="nucleotide sequence ID" value="NC_006348.1"/>
</dbReference>
<dbReference type="RefSeq" id="YP_102471.1">
    <property type="nucleotide sequence ID" value="NC_006348.1"/>
</dbReference>
<dbReference type="SMR" id="Q62LE8"/>
<dbReference type="GeneID" id="92978462"/>
<dbReference type="KEGG" id="bma:BMA0700"/>
<dbReference type="PATRIC" id="fig|243160.12.peg.721"/>
<dbReference type="eggNOG" id="COG0853">
    <property type="taxonomic scope" value="Bacteria"/>
</dbReference>
<dbReference type="HOGENOM" id="CLU_115305_2_1_4"/>
<dbReference type="UniPathway" id="UPA00028">
    <property type="reaction ID" value="UER00002"/>
</dbReference>
<dbReference type="Proteomes" id="UP000006693">
    <property type="component" value="Chromosome 1"/>
</dbReference>
<dbReference type="GO" id="GO:0005829">
    <property type="term" value="C:cytosol"/>
    <property type="evidence" value="ECO:0007669"/>
    <property type="project" value="TreeGrafter"/>
</dbReference>
<dbReference type="GO" id="GO:0004068">
    <property type="term" value="F:aspartate 1-decarboxylase activity"/>
    <property type="evidence" value="ECO:0007669"/>
    <property type="project" value="UniProtKB-UniRule"/>
</dbReference>
<dbReference type="GO" id="GO:0006523">
    <property type="term" value="P:alanine biosynthetic process"/>
    <property type="evidence" value="ECO:0007669"/>
    <property type="project" value="InterPro"/>
</dbReference>
<dbReference type="GO" id="GO:0015940">
    <property type="term" value="P:pantothenate biosynthetic process"/>
    <property type="evidence" value="ECO:0007669"/>
    <property type="project" value="UniProtKB-UniRule"/>
</dbReference>
<dbReference type="CDD" id="cd06919">
    <property type="entry name" value="Asp_decarbox"/>
    <property type="match status" value="1"/>
</dbReference>
<dbReference type="Gene3D" id="2.40.40.20">
    <property type="match status" value="1"/>
</dbReference>
<dbReference type="HAMAP" id="MF_00446">
    <property type="entry name" value="PanD"/>
    <property type="match status" value="1"/>
</dbReference>
<dbReference type="InterPro" id="IPR009010">
    <property type="entry name" value="Asp_de-COase-like_dom_sf"/>
</dbReference>
<dbReference type="InterPro" id="IPR003190">
    <property type="entry name" value="Asp_decarbox"/>
</dbReference>
<dbReference type="NCBIfam" id="TIGR00223">
    <property type="entry name" value="panD"/>
    <property type="match status" value="1"/>
</dbReference>
<dbReference type="PANTHER" id="PTHR21012">
    <property type="entry name" value="ASPARTATE 1-DECARBOXYLASE"/>
    <property type="match status" value="1"/>
</dbReference>
<dbReference type="PANTHER" id="PTHR21012:SF0">
    <property type="entry name" value="ASPARTATE 1-DECARBOXYLASE"/>
    <property type="match status" value="1"/>
</dbReference>
<dbReference type="Pfam" id="PF02261">
    <property type="entry name" value="Asp_decarbox"/>
    <property type="match status" value="1"/>
</dbReference>
<dbReference type="PIRSF" id="PIRSF006246">
    <property type="entry name" value="Asp_decarbox"/>
    <property type="match status" value="1"/>
</dbReference>
<dbReference type="SUPFAM" id="SSF50692">
    <property type="entry name" value="ADC-like"/>
    <property type="match status" value="1"/>
</dbReference>
<reference key="1">
    <citation type="journal article" date="2004" name="Proc. Natl. Acad. Sci. U.S.A.">
        <title>Structural flexibility in the Burkholderia mallei genome.</title>
        <authorList>
            <person name="Nierman W.C."/>
            <person name="DeShazer D."/>
            <person name="Kim H.S."/>
            <person name="Tettelin H."/>
            <person name="Nelson K.E."/>
            <person name="Feldblyum T.V."/>
            <person name="Ulrich R.L."/>
            <person name="Ronning C.M."/>
            <person name="Brinkac L.M."/>
            <person name="Daugherty S.C."/>
            <person name="Davidsen T.D."/>
            <person name="DeBoy R.T."/>
            <person name="Dimitrov G."/>
            <person name="Dodson R.J."/>
            <person name="Durkin A.S."/>
            <person name="Gwinn M.L."/>
            <person name="Haft D.H."/>
            <person name="Khouri H.M."/>
            <person name="Kolonay J.F."/>
            <person name="Madupu R."/>
            <person name="Mohammoud Y."/>
            <person name="Nelson W.C."/>
            <person name="Radune D."/>
            <person name="Romero C.M."/>
            <person name="Sarria S."/>
            <person name="Selengut J."/>
            <person name="Shamblin C."/>
            <person name="Sullivan S.A."/>
            <person name="White O."/>
            <person name="Yu Y."/>
            <person name="Zafar N."/>
            <person name="Zhou L."/>
            <person name="Fraser C.M."/>
        </authorList>
    </citation>
    <scope>NUCLEOTIDE SEQUENCE [LARGE SCALE GENOMIC DNA]</scope>
    <source>
        <strain>ATCC 23344</strain>
    </source>
</reference>
<protein>
    <recommendedName>
        <fullName evidence="1">Aspartate 1-decarboxylase</fullName>
        <ecNumber evidence="1">4.1.1.11</ecNumber>
    </recommendedName>
    <alternativeName>
        <fullName evidence="1">Aspartate alpha-decarboxylase</fullName>
    </alternativeName>
    <component>
        <recommendedName>
            <fullName evidence="1">Aspartate 1-decarboxylase beta chain</fullName>
        </recommendedName>
    </component>
    <component>
        <recommendedName>
            <fullName evidence="1">Aspartate 1-decarboxylase alpha chain</fullName>
        </recommendedName>
    </component>
</protein>